<organism>
    <name type="scientific">Variovorax paradoxus (strain S110)</name>
    <dbReference type="NCBI Taxonomy" id="543728"/>
    <lineage>
        <taxon>Bacteria</taxon>
        <taxon>Pseudomonadati</taxon>
        <taxon>Pseudomonadota</taxon>
        <taxon>Betaproteobacteria</taxon>
        <taxon>Burkholderiales</taxon>
        <taxon>Comamonadaceae</taxon>
        <taxon>Variovorax</taxon>
    </lineage>
</organism>
<dbReference type="EC" id="2.3.2.29" evidence="1"/>
<dbReference type="EMBL" id="CP001635">
    <property type="protein sequence ID" value="ACS19004.1"/>
    <property type="molecule type" value="Genomic_DNA"/>
</dbReference>
<dbReference type="SMR" id="C5CYP5"/>
<dbReference type="STRING" id="543728.Vapar_2377"/>
<dbReference type="KEGG" id="vap:Vapar_2377"/>
<dbReference type="eggNOG" id="COG2935">
    <property type="taxonomic scope" value="Bacteria"/>
</dbReference>
<dbReference type="HOGENOM" id="CLU_077607_0_0_4"/>
<dbReference type="OrthoDB" id="9782022at2"/>
<dbReference type="GO" id="GO:0005737">
    <property type="term" value="C:cytoplasm"/>
    <property type="evidence" value="ECO:0007669"/>
    <property type="project" value="UniProtKB-SubCell"/>
</dbReference>
<dbReference type="GO" id="GO:0004057">
    <property type="term" value="F:arginyl-tRNA--protein transferase activity"/>
    <property type="evidence" value="ECO:0007669"/>
    <property type="project" value="InterPro"/>
</dbReference>
<dbReference type="GO" id="GO:0008914">
    <property type="term" value="F:leucyl-tRNA--protein transferase activity"/>
    <property type="evidence" value="ECO:0007669"/>
    <property type="project" value="UniProtKB-UniRule"/>
</dbReference>
<dbReference type="GO" id="GO:0071596">
    <property type="term" value="P:ubiquitin-dependent protein catabolic process via the N-end rule pathway"/>
    <property type="evidence" value="ECO:0007669"/>
    <property type="project" value="InterPro"/>
</dbReference>
<dbReference type="HAMAP" id="MF_00689">
    <property type="entry name" value="Bpt"/>
    <property type="match status" value="1"/>
</dbReference>
<dbReference type="InterPro" id="IPR016181">
    <property type="entry name" value="Acyl_CoA_acyltransferase"/>
</dbReference>
<dbReference type="InterPro" id="IPR017138">
    <property type="entry name" value="Asp_Glu_LeuTrfase"/>
</dbReference>
<dbReference type="InterPro" id="IPR030700">
    <property type="entry name" value="N-end_Aminoacyl_Trfase"/>
</dbReference>
<dbReference type="InterPro" id="IPR007472">
    <property type="entry name" value="N-end_Aminoacyl_Trfase_C"/>
</dbReference>
<dbReference type="InterPro" id="IPR007471">
    <property type="entry name" value="N-end_Aminoacyl_Trfase_N"/>
</dbReference>
<dbReference type="NCBIfam" id="NF002341">
    <property type="entry name" value="PRK01305.1-1"/>
    <property type="match status" value="1"/>
</dbReference>
<dbReference type="NCBIfam" id="NF002342">
    <property type="entry name" value="PRK01305.1-3"/>
    <property type="match status" value="1"/>
</dbReference>
<dbReference type="NCBIfam" id="NF002346">
    <property type="entry name" value="PRK01305.2-3"/>
    <property type="match status" value="1"/>
</dbReference>
<dbReference type="PANTHER" id="PTHR21367">
    <property type="entry name" value="ARGININE-TRNA-PROTEIN TRANSFERASE 1"/>
    <property type="match status" value="1"/>
</dbReference>
<dbReference type="PANTHER" id="PTHR21367:SF1">
    <property type="entry name" value="ARGINYL-TRNA--PROTEIN TRANSFERASE 1"/>
    <property type="match status" value="1"/>
</dbReference>
<dbReference type="Pfam" id="PF04377">
    <property type="entry name" value="ATE_C"/>
    <property type="match status" value="1"/>
</dbReference>
<dbReference type="Pfam" id="PF04376">
    <property type="entry name" value="ATE_N"/>
    <property type="match status" value="1"/>
</dbReference>
<dbReference type="PIRSF" id="PIRSF037208">
    <property type="entry name" value="ATE_pro_prd"/>
    <property type="match status" value="1"/>
</dbReference>
<dbReference type="SUPFAM" id="SSF55729">
    <property type="entry name" value="Acyl-CoA N-acyltransferases (Nat)"/>
    <property type="match status" value="1"/>
</dbReference>
<gene>
    <name evidence="1" type="primary">bpt</name>
    <name type="ordered locus">Vapar_2377</name>
</gene>
<accession>C5CYP5</accession>
<keyword id="KW-0012">Acyltransferase</keyword>
<keyword id="KW-0963">Cytoplasm</keyword>
<keyword id="KW-0808">Transferase</keyword>
<feature type="chain" id="PRO_1000212577" description="Aspartate/glutamate leucyltransferase">
    <location>
        <begin position="1"/>
        <end position="249"/>
    </location>
</feature>
<comment type="function">
    <text evidence="1">Functions in the N-end rule pathway of protein degradation where it conjugates Leu from its aminoacyl-tRNA to the N-termini of proteins containing an N-terminal aspartate or glutamate.</text>
</comment>
<comment type="catalytic activity">
    <reaction evidence="1">
        <text>N-terminal L-glutamyl-[protein] + L-leucyl-tRNA(Leu) = N-terminal L-leucyl-L-glutamyl-[protein] + tRNA(Leu) + H(+)</text>
        <dbReference type="Rhea" id="RHEA:50412"/>
        <dbReference type="Rhea" id="RHEA-COMP:9613"/>
        <dbReference type="Rhea" id="RHEA-COMP:9622"/>
        <dbReference type="Rhea" id="RHEA-COMP:12664"/>
        <dbReference type="Rhea" id="RHEA-COMP:12668"/>
        <dbReference type="ChEBI" id="CHEBI:15378"/>
        <dbReference type="ChEBI" id="CHEBI:64721"/>
        <dbReference type="ChEBI" id="CHEBI:78442"/>
        <dbReference type="ChEBI" id="CHEBI:78494"/>
        <dbReference type="ChEBI" id="CHEBI:133041"/>
        <dbReference type="EC" id="2.3.2.29"/>
    </reaction>
</comment>
<comment type="catalytic activity">
    <reaction evidence="1">
        <text>N-terminal L-aspartyl-[protein] + L-leucyl-tRNA(Leu) = N-terminal L-leucyl-L-aspartyl-[protein] + tRNA(Leu) + H(+)</text>
        <dbReference type="Rhea" id="RHEA:50420"/>
        <dbReference type="Rhea" id="RHEA-COMP:9613"/>
        <dbReference type="Rhea" id="RHEA-COMP:9622"/>
        <dbReference type="Rhea" id="RHEA-COMP:12669"/>
        <dbReference type="Rhea" id="RHEA-COMP:12674"/>
        <dbReference type="ChEBI" id="CHEBI:15378"/>
        <dbReference type="ChEBI" id="CHEBI:64720"/>
        <dbReference type="ChEBI" id="CHEBI:78442"/>
        <dbReference type="ChEBI" id="CHEBI:78494"/>
        <dbReference type="ChEBI" id="CHEBI:133042"/>
        <dbReference type="EC" id="2.3.2.29"/>
    </reaction>
</comment>
<comment type="subcellular location">
    <subcellularLocation>
        <location evidence="1">Cytoplasm</location>
    </subcellularLocation>
</comment>
<comment type="similarity">
    <text evidence="1">Belongs to the R-transferase family. Bpt subfamily.</text>
</comment>
<evidence type="ECO:0000255" key="1">
    <source>
        <dbReference type="HAMAP-Rule" id="MF_00689"/>
    </source>
</evidence>
<name>BPT_VARPS</name>
<protein>
    <recommendedName>
        <fullName evidence="1">Aspartate/glutamate leucyltransferase</fullName>
        <ecNumber evidence="1">2.3.2.29</ecNumber>
    </recommendedName>
</protein>
<sequence length="249" mass="28491">MTHLKDLPLHTLQFYATAPYPCSYLPDRQARSQVATPSHLIHNDAYSDLVLSGFRRSGMFTYRPYCDGCRACIPLRVLVNSFQPSRSQRRAVKQHQNLLARVLKLCFVPEHYKLYLRYQTGRHAGGGMDHDSIDQYTQFLLQSRVNSRLVEFREALPDGTAGALKMVSILDVLNDGISAVYTFYEPDSSAGYGTYSVMWQIEQARKLGLPHVYLGYWIEGSAKMNYKARFAPHELLIDGRWQAPSDFTR</sequence>
<proteinExistence type="inferred from homology"/>
<reference key="1">
    <citation type="journal article" date="2011" name="J. Bacteriol.">
        <title>Complete genome sequence of the metabolically versatile plant growth-promoting endophyte, Variovorax paradoxus S110.</title>
        <authorList>
            <person name="Han J.I."/>
            <person name="Choi H.K."/>
            <person name="Lee S.W."/>
            <person name="Orwin P.M."/>
            <person name="Kim J."/>
            <person name="Laroe S.L."/>
            <person name="Kim T.G."/>
            <person name="O'Neil J."/>
            <person name="Leadbetter J.R."/>
            <person name="Lee S.Y."/>
            <person name="Hur C.G."/>
            <person name="Spain J.C."/>
            <person name="Ovchinnikova G."/>
            <person name="Goodwin L."/>
            <person name="Han C."/>
        </authorList>
    </citation>
    <scope>NUCLEOTIDE SEQUENCE [LARGE SCALE GENOMIC DNA]</scope>
    <source>
        <strain>S110</strain>
    </source>
</reference>